<feature type="chain" id="PRO_0000403406" description="Peroxisomal (S)-2-hydroxyacid oxidase GLO3">
    <location>
        <begin position="1"/>
        <end position="363"/>
    </location>
</feature>
<feature type="domain" description="FMN hydroxy acid dehydrogenase" evidence="3">
    <location>
        <begin position="1"/>
        <end position="357"/>
    </location>
</feature>
<feature type="short sequence motif" description="Microbody targeting signal" evidence="2">
    <location>
        <begin position="361"/>
        <end position="363"/>
    </location>
</feature>
<feature type="active site" description="Proton acceptor" evidence="1">
    <location>
        <position position="252"/>
    </location>
</feature>
<feature type="binding site" evidence="1">
    <location>
        <begin position="78"/>
        <end position="80"/>
    </location>
    <ligand>
        <name>FMN</name>
        <dbReference type="ChEBI" id="CHEBI:58210"/>
    </ligand>
</feature>
<feature type="binding site" evidence="1">
    <location>
        <position position="107"/>
    </location>
    <ligand>
        <name>FMN</name>
        <dbReference type="ChEBI" id="CHEBI:58210"/>
    </ligand>
</feature>
<feature type="binding site" evidence="1">
    <location>
        <begin position="128"/>
        <end position="130"/>
    </location>
    <ligand>
        <name>FMN</name>
        <dbReference type="ChEBI" id="CHEBI:58210"/>
    </ligand>
</feature>
<feature type="binding site" evidence="3">
    <location>
        <position position="130"/>
    </location>
    <ligand>
        <name>a 2-oxocarboxylate</name>
        <dbReference type="ChEBI" id="CHEBI:35179"/>
    </ligand>
</feature>
<feature type="binding site" evidence="1">
    <location>
        <position position="156"/>
    </location>
    <ligand>
        <name>FMN</name>
        <dbReference type="ChEBI" id="CHEBI:58210"/>
    </ligand>
</feature>
<feature type="binding site" evidence="3">
    <location>
        <position position="165"/>
    </location>
    <ligand>
        <name>a 2-oxocarboxylate</name>
        <dbReference type="ChEBI" id="CHEBI:35179"/>
    </ligand>
</feature>
<feature type="binding site" evidence="1">
    <location>
        <position position="228"/>
    </location>
    <ligand>
        <name>FMN</name>
        <dbReference type="ChEBI" id="CHEBI:58210"/>
    </ligand>
</feature>
<feature type="binding site" evidence="1">
    <location>
        <position position="250"/>
    </location>
    <ligand>
        <name>FMN</name>
        <dbReference type="ChEBI" id="CHEBI:58210"/>
    </ligand>
</feature>
<feature type="binding site" evidence="3">
    <location>
        <position position="255"/>
    </location>
    <ligand>
        <name>a 2-oxocarboxylate</name>
        <dbReference type="ChEBI" id="CHEBI:35179"/>
    </ligand>
</feature>
<feature type="binding site" evidence="1">
    <location>
        <begin position="283"/>
        <end position="287"/>
    </location>
    <ligand>
        <name>FMN</name>
        <dbReference type="ChEBI" id="CHEBI:58210"/>
    </ligand>
</feature>
<feature type="binding site" evidence="1">
    <location>
        <begin position="306"/>
        <end position="307"/>
    </location>
    <ligand>
        <name>FMN</name>
        <dbReference type="ChEBI" id="CHEBI:58210"/>
    </ligand>
</feature>
<feature type="sequence conflict" description="In Ref. 4; AAM67194." evidence="6" ref="4">
    <original>P</original>
    <variation>L</variation>
    <location>
        <position position="87"/>
    </location>
</feature>
<feature type="sequence conflict" description="In Ref. 4; AAM67194." evidence="6" ref="4">
    <original>I</original>
    <variation>M</variation>
    <location>
        <position position="309"/>
    </location>
</feature>
<accession>Q24JJ8</accession>
<accession>Q8L8P3</accession>
<accession>Q9LJH3</accession>
<organism>
    <name type="scientific">Arabidopsis thaliana</name>
    <name type="common">Mouse-ear cress</name>
    <dbReference type="NCBI Taxonomy" id="3702"/>
    <lineage>
        <taxon>Eukaryota</taxon>
        <taxon>Viridiplantae</taxon>
        <taxon>Streptophyta</taxon>
        <taxon>Embryophyta</taxon>
        <taxon>Tracheophyta</taxon>
        <taxon>Spermatophyta</taxon>
        <taxon>Magnoliopsida</taxon>
        <taxon>eudicotyledons</taxon>
        <taxon>Gunneridae</taxon>
        <taxon>Pentapetalae</taxon>
        <taxon>rosids</taxon>
        <taxon>malvids</taxon>
        <taxon>Brassicales</taxon>
        <taxon>Brassicaceae</taxon>
        <taxon>Camelineae</taxon>
        <taxon>Arabidopsis</taxon>
    </lineage>
</organism>
<reference key="1">
    <citation type="journal article" date="2000" name="DNA Res.">
        <title>Structural analysis of Arabidopsis thaliana chromosome 3. II. Sequence features of the 4,251,695 bp regions covered by 90 P1, TAC and BAC clones.</title>
        <authorList>
            <person name="Kaneko T."/>
            <person name="Katoh T."/>
            <person name="Sato S."/>
            <person name="Nakamura Y."/>
            <person name="Asamizu E."/>
            <person name="Tabata S."/>
        </authorList>
    </citation>
    <scope>NUCLEOTIDE SEQUENCE [LARGE SCALE GENOMIC DNA]</scope>
    <source>
        <strain>cv. Columbia</strain>
    </source>
</reference>
<reference key="2">
    <citation type="journal article" date="2017" name="Plant J.">
        <title>Araport11: a complete reannotation of the Arabidopsis thaliana reference genome.</title>
        <authorList>
            <person name="Cheng C.Y."/>
            <person name="Krishnakumar V."/>
            <person name="Chan A.P."/>
            <person name="Thibaud-Nissen F."/>
            <person name="Schobel S."/>
            <person name="Town C.D."/>
        </authorList>
    </citation>
    <scope>GENOME REANNOTATION</scope>
    <source>
        <strain>cv. Columbia</strain>
    </source>
</reference>
<reference key="3">
    <citation type="submission" date="2008-06" db="EMBL/GenBank/DDBJ databases">
        <title>Arabidopsis ORF clones.</title>
        <authorList>
            <person name="Shinn P."/>
            <person name="Chen H."/>
            <person name="Kim C.J."/>
            <person name="Ecker J.R."/>
        </authorList>
    </citation>
    <scope>NUCLEOTIDE SEQUENCE [LARGE SCALE MRNA]</scope>
    <source>
        <strain>cv. Columbia</strain>
    </source>
</reference>
<reference key="4">
    <citation type="submission" date="2002-03" db="EMBL/GenBank/DDBJ databases">
        <title>Full-length cDNA from Arabidopsis thaliana.</title>
        <authorList>
            <person name="Brover V.V."/>
            <person name="Troukhan M.E."/>
            <person name="Alexandrov N.A."/>
            <person name="Lu Y.-P."/>
            <person name="Flavell R.B."/>
            <person name="Feldmann K.A."/>
        </authorList>
    </citation>
    <scope>NUCLEOTIDE SEQUENCE [LARGE SCALE MRNA]</scope>
</reference>
<reference key="5">
    <citation type="journal article" date="2009" name="J. Exp. Bot.">
        <title>Inducible antisense suppression of glycolate oxidase reveals its strong regulation over photosynthesis in rice.</title>
        <authorList>
            <person name="Xu H.-W."/>
            <person name="Zhang J."/>
            <person name="Zeng J."/>
            <person name="Jiang L."/>
            <person name="Liu E."/>
            <person name="Peng C."/>
            <person name="He Z.-H."/>
            <person name="Peng X.-X."/>
        </authorList>
    </citation>
    <scope>GENE FAMILY</scope>
    <scope>NOMENCLATURE</scope>
</reference>
<reference key="6">
    <citation type="journal article" date="2009" name="Plant Physiol.">
        <title>In-depth proteome analysis of Arabidopsis leaf peroxisomes combined with in vivo subcellular targeting verification indicates novel metabolic and regulatory functions of peroxisomes.</title>
        <authorList>
            <person name="Reumann S."/>
            <person name="Quan S."/>
            <person name="Aung K."/>
            <person name="Yang P."/>
            <person name="Manandhar-Shrestha K."/>
            <person name="Holbrook D."/>
            <person name="Linka N."/>
            <person name="Switzenberg R."/>
            <person name="Wilkerson C.G."/>
            <person name="Weber A.P."/>
            <person name="Olsen L.J."/>
            <person name="Hu J."/>
        </authorList>
    </citation>
    <scope>SUBCELLULAR LOCATION</scope>
</reference>
<reference key="7">
    <citation type="journal article" date="2014" name="Mol. Biol. Evol.">
        <title>Plant and animal glycolate oxidases have a common eukaryotic ancestor and convergently duplicated to evolve long-chain 2-hydroxy acid oxidases.</title>
        <authorList>
            <person name="Esser C."/>
            <person name="Kuhn A."/>
            <person name="Groth G."/>
            <person name="Lercher M.J."/>
            <person name="Maurino V.G."/>
        </authorList>
    </citation>
    <scope>FUNCTION</scope>
    <scope>CATALYTIC ACTIVITY</scope>
    <scope>SUBSTRATE SPECIFICITY</scope>
</reference>
<gene>
    <name type="primary">GLO3</name>
    <name type="ordered locus">At3g14150</name>
    <name type="ORF">MAG2.11</name>
</gene>
<protein>
    <recommendedName>
        <fullName>Peroxisomal (S)-2-hydroxyacid oxidase GLO3</fullName>
        <ecNumber evidence="4">1.1.3.15</ecNumber>
    </recommendedName>
    <alternativeName>
        <fullName>Glycolate oxidase 3</fullName>
        <shortName>AtGLO3</shortName>
        <shortName>GOX 3</shortName>
    </alternativeName>
    <alternativeName>
        <fullName>Short chain alpha-hydroxy acid oxidase GLO3</fullName>
    </alternativeName>
    <alternativeName>
        <fullName evidence="5">lHAOX2</fullName>
    </alternativeName>
</protein>
<dbReference type="EC" id="1.1.3.15" evidence="4"/>
<dbReference type="EMBL" id="AP000600">
    <property type="protein sequence ID" value="BAB02979.1"/>
    <property type="status" value="ALT_SEQ"/>
    <property type="molecule type" value="Genomic_DNA"/>
</dbReference>
<dbReference type="EMBL" id="CP002686">
    <property type="protein sequence ID" value="AEE75477.1"/>
    <property type="molecule type" value="Genomic_DNA"/>
</dbReference>
<dbReference type="EMBL" id="CP002686">
    <property type="protein sequence ID" value="AEE75478.1"/>
    <property type="molecule type" value="Genomic_DNA"/>
</dbReference>
<dbReference type="EMBL" id="BT024891">
    <property type="protein sequence ID" value="ABD85162.1"/>
    <property type="molecule type" value="mRNA"/>
</dbReference>
<dbReference type="EMBL" id="AY088888">
    <property type="protein sequence ID" value="AAM67194.1"/>
    <property type="molecule type" value="mRNA"/>
</dbReference>
<dbReference type="SMR" id="Q24JJ8"/>
<dbReference type="FunCoup" id="Q24JJ8">
    <property type="interactions" value="1338"/>
</dbReference>
<dbReference type="STRING" id="3702.Q24JJ8"/>
<dbReference type="PaxDb" id="3702-AT3G14150.1"/>
<dbReference type="ProteomicsDB" id="248577"/>
<dbReference type="EnsemblPlants" id="AT3G14150.1">
    <property type="protein sequence ID" value="AT3G14150.1"/>
    <property type="gene ID" value="AT3G14150"/>
</dbReference>
<dbReference type="EnsemblPlants" id="AT3G14150.2">
    <property type="protein sequence ID" value="AT3G14150.2"/>
    <property type="gene ID" value="AT3G14150"/>
</dbReference>
<dbReference type="Gramene" id="AT3G14150.1">
    <property type="protein sequence ID" value="AT3G14150.1"/>
    <property type="gene ID" value="AT3G14150"/>
</dbReference>
<dbReference type="Gramene" id="AT3G14150.2">
    <property type="protein sequence ID" value="AT3G14150.2"/>
    <property type="gene ID" value="AT3G14150"/>
</dbReference>
<dbReference type="KEGG" id="ath:AT3G14150"/>
<dbReference type="Araport" id="AT3G14150"/>
<dbReference type="TAIR" id="AT3G14150">
    <property type="gene designation" value="HAOX2"/>
</dbReference>
<dbReference type="eggNOG" id="KOG0538">
    <property type="taxonomic scope" value="Eukaryota"/>
</dbReference>
<dbReference type="HOGENOM" id="CLU_020639_1_0_1"/>
<dbReference type="InParanoid" id="Q24JJ8"/>
<dbReference type="OMA" id="RKYVQHA"/>
<dbReference type="OrthoDB" id="25826at2759"/>
<dbReference type="PhylomeDB" id="Q24JJ8"/>
<dbReference type="BioCyc" id="ARA:AT3G14150-MONOMER"/>
<dbReference type="BRENDA" id="1.1.3.15">
    <property type="organism ID" value="399"/>
</dbReference>
<dbReference type="PRO" id="PR:Q24JJ8"/>
<dbReference type="Proteomes" id="UP000006548">
    <property type="component" value="Chromosome 3"/>
</dbReference>
<dbReference type="ExpressionAtlas" id="Q24JJ8">
    <property type="expression patterns" value="baseline and differential"/>
</dbReference>
<dbReference type="GO" id="GO:0005777">
    <property type="term" value="C:peroxisome"/>
    <property type="evidence" value="ECO:0000314"/>
    <property type="project" value="TAIR"/>
</dbReference>
<dbReference type="GO" id="GO:0003973">
    <property type="term" value="F:(S)-2-hydroxy-acid oxidase activity"/>
    <property type="evidence" value="ECO:0007669"/>
    <property type="project" value="UniProtKB-EC"/>
</dbReference>
<dbReference type="GO" id="GO:0010181">
    <property type="term" value="F:FMN binding"/>
    <property type="evidence" value="ECO:0007669"/>
    <property type="project" value="InterPro"/>
</dbReference>
<dbReference type="GO" id="GO:0042742">
    <property type="term" value="P:defense response to bacterium"/>
    <property type="evidence" value="ECO:0000315"/>
    <property type="project" value="TAIR"/>
</dbReference>
<dbReference type="GO" id="GO:0050665">
    <property type="term" value="P:hydrogen peroxide biosynthetic process"/>
    <property type="evidence" value="ECO:0000315"/>
    <property type="project" value="TAIR"/>
</dbReference>
<dbReference type="CDD" id="cd02809">
    <property type="entry name" value="alpha_hydroxyacid_oxid_FMN"/>
    <property type="match status" value="1"/>
</dbReference>
<dbReference type="FunFam" id="3.20.20.70:FF:000204">
    <property type="entry name" value="Peroxisomal (S)-2-hydroxy-acid oxidase GLO4"/>
    <property type="match status" value="1"/>
</dbReference>
<dbReference type="Gene3D" id="3.20.20.70">
    <property type="entry name" value="Aldolase class I"/>
    <property type="match status" value="1"/>
</dbReference>
<dbReference type="InterPro" id="IPR013785">
    <property type="entry name" value="Aldolase_TIM"/>
</dbReference>
<dbReference type="InterPro" id="IPR012133">
    <property type="entry name" value="Alpha-hydoxy_acid_DH_FMN"/>
</dbReference>
<dbReference type="InterPro" id="IPR000262">
    <property type="entry name" value="FMN-dep_DH"/>
</dbReference>
<dbReference type="InterPro" id="IPR037396">
    <property type="entry name" value="FMN_HAD"/>
</dbReference>
<dbReference type="InterPro" id="IPR008259">
    <property type="entry name" value="FMN_hydac_DH_AS"/>
</dbReference>
<dbReference type="PANTHER" id="PTHR10578:SF67">
    <property type="entry name" value="PEROXISOMAL (S)-2-HYDROXYACID OXIDASE GLO3"/>
    <property type="match status" value="1"/>
</dbReference>
<dbReference type="PANTHER" id="PTHR10578">
    <property type="entry name" value="S -2-HYDROXY-ACID OXIDASE-RELATED"/>
    <property type="match status" value="1"/>
</dbReference>
<dbReference type="Pfam" id="PF01070">
    <property type="entry name" value="FMN_dh"/>
    <property type="match status" value="1"/>
</dbReference>
<dbReference type="PIRSF" id="PIRSF000138">
    <property type="entry name" value="Al-hdrx_acd_dh"/>
    <property type="match status" value="1"/>
</dbReference>
<dbReference type="SUPFAM" id="SSF51395">
    <property type="entry name" value="FMN-linked oxidoreductases"/>
    <property type="match status" value="1"/>
</dbReference>
<dbReference type="PROSITE" id="PS00557">
    <property type="entry name" value="FMN_HYDROXY_ACID_DH_1"/>
    <property type="match status" value="1"/>
</dbReference>
<dbReference type="PROSITE" id="PS51349">
    <property type="entry name" value="FMN_HYDROXY_ACID_DH_2"/>
    <property type="match status" value="1"/>
</dbReference>
<keyword id="KW-0285">Flavoprotein</keyword>
<keyword id="KW-0288">FMN</keyword>
<keyword id="KW-0560">Oxidoreductase</keyword>
<keyword id="KW-0576">Peroxisome</keyword>
<keyword id="KW-1185">Reference proteome</keyword>
<name>HAOX2_ARATH</name>
<evidence type="ECO:0000250" key="1">
    <source>
        <dbReference type="UniProtKB" id="P05414"/>
    </source>
</evidence>
<evidence type="ECO:0000255" key="2"/>
<evidence type="ECO:0000255" key="3">
    <source>
        <dbReference type="PROSITE-ProRule" id="PRU00683"/>
    </source>
</evidence>
<evidence type="ECO:0000269" key="4">
    <source>
    </source>
</evidence>
<evidence type="ECO:0000303" key="5">
    <source>
    </source>
</evidence>
<evidence type="ECO:0000305" key="6"/>
<evidence type="ECO:0000305" key="7">
    <source>
    </source>
</evidence>
<evidence type="ECO:0000305" key="8">
    <source>
    </source>
</evidence>
<proteinExistence type="evidence at protein level"/>
<comment type="function">
    <text evidence="4">Oxidase that catalyzes the oxidation of a broad range of 2-hydroxyacids to the corresponding 2-oxoacids, with a reduction of O2 to H2O2. Displays the highest activity with leucic acid (2-hydroxy-4-methylpentanoate) and has intermediate activity with 2-hydroxyhexanoate and 2-hydroxyoctanote. Shows lower activity with 2-hydroxydodecanoate, valic acid, and isoleucic acid and extremely low activity with glycolate and L-lactate. Cannot use 2-hydroxyhexadecanoate or D-lactate as substrates. May be involved in the conversion or degradation of 2-hydroxyacids produced during the metabolism of fatty acids or amino acids.</text>
</comment>
<comment type="catalytic activity">
    <reaction evidence="4">
        <text>a (2S)-2-hydroxycarboxylate + O2 = a 2-oxocarboxylate + H2O2</text>
        <dbReference type="Rhea" id="RHEA:16789"/>
        <dbReference type="ChEBI" id="CHEBI:15379"/>
        <dbReference type="ChEBI" id="CHEBI:16240"/>
        <dbReference type="ChEBI" id="CHEBI:35179"/>
        <dbReference type="ChEBI" id="CHEBI:58123"/>
        <dbReference type="EC" id="1.1.3.15"/>
    </reaction>
    <physiologicalReaction direction="left-to-right" evidence="8">
        <dbReference type="Rhea" id="RHEA:16790"/>
    </physiologicalReaction>
</comment>
<comment type="catalytic activity">
    <reaction evidence="4">
        <text>2-hydroxy-4-methylpentanoate + O2 = 4-methyl-2-oxopentanoate + H2O2</text>
        <dbReference type="Rhea" id="RHEA:69380"/>
        <dbReference type="ChEBI" id="CHEBI:15379"/>
        <dbReference type="ChEBI" id="CHEBI:16240"/>
        <dbReference type="ChEBI" id="CHEBI:17865"/>
        <dbReference type="ChEBI" id="CHEBI:133577"/>
    </reaction>
    <physiologicalReaction direction="left-to-right" evidence="8">
        <dbReference type="Rhea" id="RHEA:69381"/>
    </physiologicalReaction>
</comment>
<comment type="catalytic activity">
    <reaction evidence="4">
        <text>2-hydroxyhexanoate + O2 = 2-oxohexanoate + H2O2</text>
        <dbReference type="Rhea" id="RHEA:69372"/>
        <dbReference type="ChEBI" id="CHEBI:15379"/>
        <dbReference type="ChEBI" id="CHEBI:16240"/>
        <dbReference type="ChEBI" id="CHEBI:35177"/>
        <dbReference type="ChEBI" id="CHEBI:133738"/>
    </reaction>
    <physiologicalReaction direction="left-to-right" evidence="8">
        <dbReference type="Rhea" id="RHEA:69373"/>
    </physiologicalReaction>
</comment>
<comment type="catalytic activity">
    <reaction evidence="4">
        <text>2-hydroxyoctanoate + O2 = 2-oxooctanoate + H2O2</text>
        <dbReference type="Rhea" id="RHEA:67940"/>
        <dbReference type="ChEBI" id="CHEBI:15379"/>
        <dbReference type="ChEBI" id="CHEBI:16240"/>
        <dbReference type="ChEBI" id="CHEBI:133514"/>
        <dbReference type="ChEBI" id="CHEBI:176689"/>
    </reaction>
    <physiologicalReaction direction="left-to-right" evidence="8">
        <dbReference type="Rhea" id="RHEA:67941"/>
    </physiologicalReaction>
</comment>
<comment type="cofactor">
    <cofactor evidence="1">
        <name>FMN</name>
        <dbReference type="ChEBI" id="CHEBI:58210"/>
    </cofactor>
</comment>
<comment type="subunit">
    <text evidence="1">Homotetramer.</text>
</comment>
<comment type="subcellular location">
    <subcellularLocation>
        <location evidence="7">Peroxisome</location>
    </subcellularLocation>
</comment>
<comment type="similarity">
    <text evidence="3">Belongs to the FMN-dependent alpha-hydroxy acid dehydrogenase family.</text>
</comment>
<comment type="sequence caution" evidence="6">
    <conflict type="erroneous gene model prediction">
        <sequence resource="EMBL-CDS" id="BAB02979"/>
    </conflict>
</comment>
<sequence length="363" mass="40130">MDQIVNVDEFQELAKQALPKMYYDFYNGGAEDQHTLNENVQAFRRIMFRPRVLVDVSKIDMSTKILGYPISAPIMIAPTGNHKLAHPEGETATAKAAAACNTIMIVSYMSSCTFEEIASSCNAVRFLQIYVYKRRDITAQVVKRAEKAGFKAIVLTVDVPRLGRREADIKNKMISPQLKNFEGLFSTEVRPSKGSGVQAFASRAFDASFSWKDIEWLRSITELPILVKGILTREDALKAVEAGVDGIIVSNHGGRQLDYSPATITVLEEVVQVVRGRIPVLLDGGVRRGTDVFKALALGAQAVLIGRPIIYGLAAKGEDGVKKVIDMLKNEFEITMALSGCPTIDDITRNHVRTENERLHSML</sequence>